<proteinExistence type="evidence at protein level"/>
<accession>P68731</accession>
<accession>P06563</accession>
<keyword id="KW-0903">Direct protein sequencing</keyword>
<keyword id="KW-1185">Reference proteome</keyword>
<keyword id="KW-0804">Transcription</keyword>
<keyword id="KW-0805">Transcription regulation</keyword>
<evidence type="ECO:0000269" key="1">
    <source>
    </source>
</evidence>
<evidence type="ECO:0000269" key="2">
    <source>
    </source>
</evidence>
<evidence type="ECO:0000269" key="3">
    <source>
    </source>
</evidence>
<evidence type="ECO:0000305" key="4">
    <source>
    </source>
</evidence>
<organism>
    <name type="scientific">Bacillus subtilis (strain 168)</name>
    <dbReference type="NCBI Taxonomy" id="224308"/>
    <lineage>
        <taxon>Bacteria</taxon>
        <taxon>Bacillati</taxon>
        <taxon>Bacillota</taxon>
        <taxon>Bacilli</taxon>
        <taxon>Bacillales</taxon>
        <taxon>Bacillaceae</taxon>
        <taxon>Bacillus</taxon>
    </lineage>
</organism>
<dbReference type="EMBL" id="M15318">
    <property type="protein sequence ID" value="AAA22672.1"/>
    <property type="molecule type" value="Genomic_DNA"/>
</dbReference>
<dbReference type="EMBL" id="L77246">
    <property type="protein sequence ID" value="AAA96622.1"/>
    <property type="molecule type" value="Genomic_DNA"/>
</dbReference>
<dbReference type="EMBL" id="AL009126">
    <property type="protein sequence ID" value="CAB14112.1"/>
    <property type="molecule type" value="Genomic_DNA"/>
</dbReference>
<dbReference type="PIR" id="I39957">
    <property type="entry name" value="I39957"/>
</dbReference>
<dbReference type="RefSeq" id="NP_390077.1">
    <property type="nucleotide sequence ID" value="NC_000964.3"/>
</dbReference>
<dbReference type="RefSeq" id="WP_003230774.1">
    <property type="nucleotide sequence ID" value="NZ_OZ025638.1"/>
</dbReference>
<dbReference type="SMR" id="P68731"/>
<dbReference type="FunCoup" id="P68731">
    <property type="interactions" value="25"/>
</dbReference>
<dbReference type="STRING" id="224308.BSU21940"/>
<dbReference type="PaxDb" id="224308-BSU21940"/>
<dbReference type="EnsemblBacteria" id="CAB14112">
    <property type="protein sequence ID" value="CAB14112"/>
    <property type="gene ID" value="BSU_21940"/>
</dbReference>
<dbReference type="GeneID" id="939076"/>
<dbReference type="KEGG" id="bsu:BSU21940"/>
<dbReference type="PATRIC" id="fig|224308.179.peg.2396"/>
<dbReference type="InParanoid" id="P68731"/>
<dbReference type="OrthoDB" id="2910406at2"/>
<dbReference type="BioCyc" id="BSUB:BSU21940-MONOMER"/>
<dbReference type="Proteomes" id="UP000001570">
    <property type="component" value="Chromosome"/>
</dbReference>
<name>DEGR_BACSU</name>
<gene>
    <name type="primary">degR</name>
    <name type="synonym">prtR</name>
    <name type="ordered locus">BSU21940</name>
</gene>
<protein>
    <recommendedName>
        <fullName>Regulatory protein DegR</fullName>
    </recommendedName>
</protein>
<sequence length="60" mass="7109">MDDKDLKLILHKTFIEIYSDLEELADIAKKGKPSMEKYVEEIEQRCKQNILAIEIQMKIK</sequence>
<reference key="1">
    <citation type="journal article" date="1987" name="J. Bacteriol.">
        <title>Characterization and mapping of the Bacillus subtilis prtR gene.</title>
        <authorList>
            <person name="Yang M."/>
            <person name="Shimotsu H."/>
            <person name="Ferrari E."/>
            <person name="Henner D.J."/>
        </authorList>
    </citation>
    <scope>NUCLEOTIDE SEQUENCE [GENOMIC DNA]</scope>
    <source>
        <strain>168 / PY79</strain>
    </source>
</reference>
<reference key="2">
    <citation type="journal article" date="1996" name="Microbiology">
        <title>Organization of the Bacillus subtilis 168 chromosome between kdg and the attachment site of the SP beta prophage: use of long accurate PCR and yeast artificial chromosomes for sequencing.</title>
        <authorList>
            <person name="Capuano V."/>
            <person name="Galleron N."/>
            <person name="Pujic P."/>
            <person name="Sorokin A."/>
            <person name="Ehrlich S.D."/>
        </authorList>
    </citation>
    <scope>NUCLEOTIDE SEQUENCE [GENOMIC DNA]</scope>
    <source>
        <strain>168 / Marburg / ATCC 6051 / DSM 10 / JCM 1465 / NBRC 13719 / NCIMB 3610 / NRRL NRS-744 / VKM B-501</strain>
    </source>
</reference>
<reference key="3">
    <citation type="journal article" date="1997" name="Nature">
        <title>The complete genome sequence of the Gram-positive bacterium Bacillus subtilis.</title>
        <authorList>
            <person name="Kunst F."/>
            <person name="Ogasawara N."/>
            <person name="Moszer I."/>
            <person name="Albertini A.M."/>
            <person name="Alloni G."/>
            <person name="Azevedo V."/>
            <person name="Bertero M.G."/>
            <person name="Bessieres P."/>
            <person name="Bolotin A."/>
            <person name="Borchert S."/>
            <person name="Borriss R."/>
            <person name="Boursier L."/>
            <person name="Brans A."/>
            <person name="Braun M."/>
            <person name="Brignell S.C."/>
            <person name="Bron S."/>
            <person name="Brouillet S."/>
            <person name="Bruschi C.V."/>
            <person name="Caldwell B."/>
            <person name="Capuano V."/>
            <person name="Carter N.M."/>
            <person name="Choi S.-K."/>
            <person name="Codani J.-J."/>
            <person name="Connerton I.F."/>
            <person name="Cummings N.J."/>
            <person name="Daniel R.A."/>
            <person name="Denizot F."/>
            <person name="Devine K.M."/>
            <person name="Duesterhoeft A."/>
            <person name="Ehrlich S.D."/>
            <person name="Emmerson P.T."/>
            <person name="Entian K.-D."/>
            <person name="Errington J."/>
            <person name="Fabret C."/>
            <person name="Ferrari E."/>
            <person name="Foulger D."/>
            <person name="Fritz C."/>
            <person name="Fujita M."/>
            <person name="Fujita Y."/>
            <person name="Fuma S."/>
            <person name="Galizzi A."/>
            <person name="Galleron N."/>
            <person name="Ghim S.-Y."/>
            <person name="Glaser P."/>
            <person name="Goffeau A."/>
            <person name="Golightly E.J."/>
            <person name="Grandi G."/>
            <person name="Guiseppi G."/>
            <person name="Guy B.J."/>
            <person name="Haga K."/>
            <person name="Haiech J."/>
            <person name="Harwood C.R."/>
            <person name="Henaut A."/>
            <person name="Hilbert H."/>
            <person name="Holsappel S."/>
            <person name="Hosono S."/>
            <person name="Hullo M.-F."/>
            <person name="Itaya M."/>
            <person name="Jones L.-M."/>
            <person name="Joris B."/>
            <person name="Karamata D."/>
            <person name="Kasahara Y."/>
            <person name="Klaerr-Blanchard M."/>
            <person name="Klein C."/>
            <person name="Kobayashi Y."/>
            <person name="Koetter P."/>
            <person name="Koningstein G."/>
            <person name="Krogh S."/>
            <person name="Kumano M."/>
            <person name="Kurita K."/>
            <person name="Lapidus A."/>
            <person name="Lardinois S."/>
            <person name="Lauber J."/>
            <person name="Lazarevic V."/>
            <person name="Lee S.-M."/>
            <person name="Levine A."/>
            <person name="Liu H."/>
            <person name="Masuda S."/>
            <person name="Mauel C."/>
            <person name="Medigue C."/>
            <person name="Medina N."/>
            <person name="Mellado R.P."/>
            <person name="Mizuno M."/>
            <person name="Moestl D."/>
            <person name="Nakai S."/>
            <person name="Noback M."/>
            <person name="Noone D."/>
            <person name="O'Reilly M."/>
            <person name="Ogawa K."/>
            <person name="Ogiwara A."/>
            <person name="Oudega B."/>
            <person name="Park S.-H."/>
            <person name="Parro V."/>
            <person name="Pohl T.M."/>
            <person name="Portetelle D."/>
            <person name="Porwollik S."/>
            <person name="Prescott A.M."/>
            <person name="Presecan E."/>
            <person name="Pujic P."/>
            <person name="Purnelle B."/>
            <person name="Rapoport G."/>
            <person name="Rey M."/>
            <person name="Reynolds S."/>
            <person name="Rieger M."/>
            <person name="Rivolta C."/>
            <person name="Rocha E."/>
            <person name="Roche B."/>
            <person name="Rose M."/>
            <person name="Sadaie Y."/>
            <person name="Sato T."/>
            <person name="Scanlan E."/>
            <person name="Schleich S."/>
            <person name="Schroeter R."/>
            <person name="Scoffone F."/>
            <person name="Sekiguchi J."/>
            <person name="Sekowska A."/>
            <person name="Seror S.J."/>
            <person name="Serror P."/>
            <person name="Shin B.-S."/>
            <person name="Soldo B."/>
            <person name="Sorokin A."/>
            <person name="Tacconi E."/>
            <person name="Takagi T."/>
            <person name="Takahashi H."/>
            <person name="Takemaru K."/>
            <person name="Takeuchi M."/>
            <person name="Tamakoshi A."/>
            <person name="Tanaka T."/>
            <person name="Terpstra P."/>
            <person name="Tognoni A."/>
            <person name="Tosato V."/>
            <person name="Uchiyama S."/>
            <person name="Vandenbol M."/>
            <person name="Vannier F."/>
            <person name="Vassarotti A."/>
            <person name="Viari A."/>
            <person name="Wambutt R."/>
            <person name="Wedler E."/>
            <person name="Wedler H."/>
            <person name="Weitzenegger T."/>
            <person name="Winters P."/>
            <person name="Wipat A."/>
            <person name="Yamamoto H."/>
            <person name="Yamane K."/>
            <person name="Yasumoto K."/>
            <person name="Yata K."/>
            <person name="Yoshida K."/>
            <person name="Yoshikawa H.-F."/>
            <person name="Zumstein E."/>
            <person name="Yoshikawa H."/>
            <person name="Danchin A."/>
        </authorList>
    </citation>
    <scope>NUCLEOTIDE SEQUENCE [LARGE SCALE GENOMIC DNA]</scope>
    <source>
        <strain>168</strain>
    </source>
</reference>
<reference key="4">
    <citation type="journal article" date="1992" name="J. Bacteriol.">
        <title>Stabilization of phosphorylated Bacillus subtilis DegU by DegR.</title>
        <authorList>
            <person name="Mukai K."/>
            <person name="Kawata-Mukai M."/>
            <person name="Tanaka T."/>
        </authorList>
    </citation>
    <scope>PROTEIN SEQUENCE OF 1-20</scope>
    <scope>FUNCTION</scope>
    <scope>SUBUNIT</scope>
</reference>
<reference key="5">
    <citation type="journal article" date="1996" name="J. Bacteriol.">
        <title>Transcription of Bacillus subtilis degR is sigma D dependent and suppressed by multicopy proB through sigma D.</title>
        <authorList>
            <person name="Ogura M."/>
            <person name="Tanaka T."/>
        </authorList>
    </citation>
    <scope>INDUCTION</scope>
</reference>
<reference key="6">
    <citation type="journal article" date="1997" name="Mol. Gen. Genet.">
        <title>Bacillus subtilis ComK negatively regulates degR gene expression.</title>
        <authorList>
            <person name="Ogura M."/>
            <person name="Tanaka T."/>
        </authorList>
    </citation>
    <scope>INDUCTION</scope>
</reference>
<comment type="function">
    <text evidence="1">Stabilizes the phosphorylated form of DegU, leading to enhanced production of levansucrase, alkaline protease, and neutral protease.</text>
</comment>
<comment type="subunit">
    <text evidence="4">Homotetramer.</text>
</comment>
<comment type="induction">
    <text evidence="2 3">Expression is sigma D-dependent. Negatively regulated by ComK.</text>
</comment>
<feature type="chain" id="PRO_0000079857" description="Regulatory protein DegR">
    <location>
        <begin position="1"/>
        <end position="60"/>
    </location>
</feature>